<accession>P82197</accession>
<accession>Q9XSD8</accession>
<keyword id="KW-0002">3D-structure</keyword>
<keyword id="KW-0007">Acetylation</keyword>
<keyword id="KW-0067">ATP-binding</keyword>
<keyword id="KW-0963">Cytoplasm</keyword>
<keyword id="KW-0903">Direct protein sequencing</keyword>
<keyword id="KW-0418">Kinase</keyword>
<keyword id="KW-0460">Magnesium</keyword>
<keyword id="KW-0479">Metal-binding</keyword>
<keyword id="KW-0547">Nucleotide-binding</keyword>
<keyword id="KW-0597">Phosphoprotein</keyword>
<keyword id="KW-0630">Potassium</keyword>
<keyword id="KW-1185">Reference proteome</keyword>
<keyword id="KW-0915">Sodium</keyword>
<keyword id="KW-0808">Transferase</keyword>
<feature type="chain" id="PRO_0000213339" description="Pyridoxal kinase">
    <location>
        <begin position="1"/>
        <end position="312"/>
    </location>
</feature>
<feature type="active site" description="Proton acceptor" evidence="1">
    <location>
        <position position="235"/>
    </location>
</feature>
<feature type="binding site" evidence="5 12">
    <location>
        <position position="12"/>
    </location>
    <ligand>
        <name>pyridoxal 5'-phosphate</name>
        <dbReference type="ChEBI" id="CHEBI:597326"/>
    </ligand>
</feature>
<feature type="binding site" evidence="5 11">
    <location>
        <position position="12"/>
    </location>
    <ligand>
        <name>pyridoxamine</name>
        <dbReference type="ChEBI" id="CHEBI:57761"/>
    </ligand>
</feature>
<feature type="binding site" evidence="5 12">
    <location>
        <position position="47"/>
    </location>
    <ligand>
        <name>pyridoxal 5'-phosphate</name>
        <dbReference type="ChEBI" id="CHEBI:597326"/>
    </ligand>
</feature>
<feature type="binding site" evidence="5 11">
    <location>
        <position position="47"/>
    </location>
    <ligand>
        <name>pyridoxamine</name>
        <dbReference type="ChEBI" id="CHEBI:57761"/>
    </ligand>
</feature>
<feature type="binding site" evidence="4 5 10 11">
    <location>
        <position position="113"/>
    </location>
    <ligand>
        <name>K(+)</name>
        <dbReference type="ChEBI" id="CHEBI:29103"/>
    </ligand>
</feature>
<feature type="binding site" evidence="5 12">
    <location>
        <position position="127"/>
    </location>
    <ligand>
        <name>pyridoxal 5'-phosphate</name>
        <dbReference type="ChEBI" id="CHEBI:597326"/>
    </ligand>
</feature>
<feature type="binding site" evidence="4 5 10 11">
    <location>
        <position position="148"/>
    </location>
    <ligand>
        <name>K(+)</name>
        <dbReference type="ChEBI" id="CHEBI:29103"/>
    </ligand>
</feature>
<feature type="binding site" evidence="4 5 12 13">
    <location>
        <position position="150"/>
    </location>
    <ligand>
        <name>ADP</name>
        <dbReference type="ChEBI" id="CHEBI:456216"/>
    </ligand>
</feature>
<feature type="binding site" evidence="4 5 10">
    <location>
        <position position="150"/>
    </location>
    <ligand>
        <name>ATP</name>
        <dbReference type="ChEBI" id="CHEBI:30616"/>
    </ligand>
</feature>
<feature type="binding site" evidence="5 12 13">
    <location>
        <begin position="186"/>
        <end position="187"/>
    </location>
    <ligand>
        <name>ADP</name>
        <dbReference type="ChEBI" id="CHEBI:456216"/>
    </ligand>
</feature>
<feature type="binding site" evidence="4 10">
    <location>
        <begin position="186"/>
        <end position="187"/>
    </location>
    <ligand>
        <name>ATP</name>
        <dbReference type="ChEBI" id="CHEBI:30616"/>
    </ligand>
</feature>
<feature type="binding site" evidence="4 5 10 11">
    <location>
        <position position="186"/>
    </location>
    <ligand>
        <name>K(+)</name>
        <dbReference type="ChEBI" id="CHEBI:29103"/>
    </ligand>
</feature>
<feature type="binding site" evidence="5 12 13">
    <location>
        <begin position="223"/>
        <end position="226"/>
    </location>
    <ligand>
        <name>ADP</name>
        <dbReference type="ChEBI" id="CHEBI:456216"/>
    </ligand>
</feature>
<feature type="binding site" evidence="4 10">
    <location>
        <begin position="223"/>
        <end position="226"/>
    </location>
    <ligand>
        <name>ATP</name>
        <dbReference type="ChEBI" id="CHEBI:30616"/>
    </ligand>
</feature>
<feature type="binding site" evidence="5 12">
    <location>
        <begin position="232"/>
        <end position="235"/>
    </location>
    <ligand>
        <name>pyridoxal 5'-phosphate</name>
        <dbReference type="ChEBI" id="CHEBI:597326"/>
    </ligand>
</feature>
<feature type="binding site" evidence="5 12 13">
    <location>
        <begin position="233"/>
        <end position="234"/>
    </location>
    <ligand>
        <name>ADP</name>
        <dbReference type="ChEBI" id="CHEBI:456216"/>
    </ligand>
</feature>
<feature type="binding site" evidence="4 10">
    <location>
        <begin position="233"/>
        <end position="234"/>
    </location>
    <ligand>
        <name>ATP</name>
        <dbReference type="ChEBI" id="CHEBI:30616"/>
    </ligand>
</feature>
<feature type="binding site" evidence="5 11">
    <location>
        <position position="235"/>
    </location>
    <ligand>
        <name>pyridoxamine</name>
        <dbReference type="ChEBI" id="CHEBI:57761"/>
    </ligand>
</feature>
<feature type="modified residue" description="N-acetylmethionine" evidence="2">
    <location>
        <position position="1"/>
    </location>
</feature>
<feature type="modified residue" description="Phosphoserine" evidence="1">
    <location>
        <position position="59"/>
    </location>
</feature>
<feature type="modified residue" description="Phosphoserine" evidence="1">
    <location>
        <position position="164"/>
    </location>
</feature>
<feature type="modified residue" description="Phosphoserine" evidence="1">
    <location>
        <position position="213"/>
    </location>
</feature>
<feature type="modified residue" description="Phosphoserine" evidence="1">
    <location>
        <position position="285"/>
    </location>
</feature>
<feature type="sequence conflict" description="In Ref. 2." evidence="6" ref="2">
    <original>RGYVGNRAATFPLQVLGFEVDAVNSVQFSNHT</original>
    <variation>MCFGGTAESLCPGDLMQHRGLTWSALPPTPPP</variation>
    <location>
        <begin position="16"/>
        <end position="47"/>
    </location>
</feature>
<feature type="sequence conflict" description="In Ref. 2; AAD34353." evidence="6" ref="2">
    <original>EL</original>
    <variation>DV</variation>
    <location>
        <begin position="61"/>
        <end position="62"/>
    </location>
</feature>
<feature type="sequence conflict" description="In Ref. 2; AAD34353." evidence="6" ref="2">
    <original>N</original>
    <variation>D</variation>
    <location>
        <position position="189"/>
    </location>
</feature>
<feature type="strand" evidence="17">
    <location>
        <begin position="6"/>
        <end position="17"/>
    </location>
</feature>
<feature type="helix" evidence="17">
    <location>
        <begin position="21"/>
        <end position="30"/>
    </location>
</feature>
<feature type="strand" evidence="17">
    <location>
        <begin position="34"/>
        <end position="45"/>
    </location>
</feature>
<feature type="strand" evidence="17">
    <location>
        <begin position="54"/>
        <end position="56"/>
    </location>
</feature>
<feature type="helix" evidence="17">
    <location>
        <begin position="59"/>
        <end position="71"/>
    </location>
</feature>
<feature type="strand" evidence="17">
    <location>
        <begin position="78"/>
        <end position="82"/>
    </location>
</feature>
<feature type="helix" evidence="17">
    <location>
        <begin position="88"/>
        <end position="104"/>
    </location>
</feature>
<feature type="strand" evidence="17">
    <location>
        <begin position="109"/>
        <end position="112"/>
    </location>
</feature>
<feature type="strand" evidence="18">
    <location>
        <begin position="116"/>
        <end position="118"/>
    </location>
</feature>
<feature type="strand" evidence="17">
    <location>
        <begin position="122"/>
        <end position="124"/>
    </location>
</feature>
<feature type="strand" evidence="18">
    <location>
        <begin position="125"/>
        <end position="128"/>
    </location>
</feature>
<feature type="helix" evidence="17">
    <location>
        <begin position="130"/>
        <end position="132"/>
    </location>
</feature>
<feature type="helix" evidence="17">
    <location>
        <begin position="133"/>
        <end position="138"/>
    </location>
</feature>
<feature type="helix" evidence="17">
    <location>
        <begin position="141"/>
        <end position="143"/>
    </location>
</feature>
<feature type="strand" evidence="17">
    <location>
        <begin position="145"/>
        <end position="147"/>
    </location>
</feature>
<feature type="helix" evidence="17">
    <location>
        <begin position="151"/>
        <end position="158"/>
    </location>
</feature>
<feature type="helix" evidence="17">
    <location>
        <begin position="165"/>
        <end position="178"/>
    </location>
</feature>
<feature type="strand" evidence="17">
    <location>
        <begin position="181"/>
        <end position="185"/>
    </location>
</feature>
<feature type="strand" evidence="17">
    <location>
        <begin position="198"/>
        <end position="207"/>
    </location>
</feature>
<feature type="strand" evidence="19">
    <location>
        <begin position="210"/>
        <end position="212"/>
    </location>
</feature>
<feature type="strand" evidence="17">
    <location>
        <begin position="215"/>
        <end position="224"/>
    </location>
</feature>
<feature type="helix" evidence="17">
    <location>
        <begin position="233"/>
        <end position="247"/>
    </location>
</feature>
<feature type="helix" evidence="17">
    <location>
        <begin position="252"/>
        <end position="277"/>
    </location>
</feature>
<feature type="strand" evidence="19">
    <location>
        <begin position="280"/>
        <end position="282"/>
    </location>
</feature>
<feature type="turn" evidence="17">
    <location>
        <begin position="286"/>
        <end position="289"/>
    </location>
</feature>
<feature type="helix" evidence="17">
    <location>
        <begin position="294"/>
        <end position="296"/>
    </location>
</feature>
<feature type="helix" evidence="17">
    <location>
        <begin position="297"/>
        <end position="301"/>
    </location>
</feature>
<proteinExistence type="evidence at protein level"/>
<dbReference type="EC" id="2.7.1.35" evidence="1"/>
<dbReference type="EMBL" id="AF125374">
    <property type="protein sequence ID" value="AAD34353.1"/>
    <property type="molecule type" value="mRNA"/>
</dbReference>
<dbReference type="RefSeq" id="NP_001009220.1">
    <property type="nucleotide sequence ID" value="NM_001009220.1"/>
</dbReference>
<dbReference type="PDB" id="1LHP">
    <property type="method" value="X-ray"/>
    <property type="resolution" value="2.10 A"/>
    <property type="chains" value="A/B=1-312"/>
</dbReference>
<dbReference type="PDB" id="1LHR">
    <property type="method" value="X-ray"/>
    <property type="resolution" value="2.60 A"/>
    <property type="chains" value="A/B=1-312"/>
</dbReference>
<dbReference type="PDB" id="1RFT">
    <property type="method" value="X-ray"/>
    <property type="resolution" value="2.80 A"/>
    <property type="chains" value="A=1-312"/>
</dbReference>
<dbReference type="PDB" id="1RFU">
    <property type="method" value="X-ray"/>
    <property type="resolution" value="2.80 A"/>
    <property type="chains" value="A/B/C/D/E/F/G/H=1-312"/>
</dbReference>
<dbReference type="PDB" id="1RFV">
    <property type="method" value="X-ray"/>
    <property type="resolution" value="2.80 A"/>
    <property type="chains" value="A/B=1-312"/>
</dbReference>
<dbReference type="PDB" id="1YGJ">
    <property type="method" value="X-ray"/>
    <property type="resolution" value="2.70 A"/>
    <property type="chains" value="A=1-312"/>
</dbReference>
<dbReference type="PDB" id="1YGK">
    <property type="method" value="X-ray"/>
    <property type="resolution" value="2.60 A"/>
    <property type="chains" value="A=1-312"/>
</dbReference>
<dbReference type="PDB" id="1YHJ">
    <property type="method" value="X-ray"/>
    <property type="resolution" value="2.80 A"/>
    <property type="chains" value="A=1-312"/>
</dbReference>
<dbReference type="PDBsum" id="1LHP"/>
<dbReference type="PDBsum" id="1LHR"/>
<dbReference type="PDBsum" id="1RFT"/>
<dbReference type="PDBsum" id="1RFU"/>
<dbReference type="PDBsum" id="1RFV"/>
<dbReference type="PDBsum" id="1YGJ"/>
<dbReference type="PDBsum" id="1YGK"/>
<dbReference type="PDBsum" id="1YHJ"/>
<dbReference type="SMR" id="P82197"/>
<dbReference type="STRING" id="9940.ENSOARP00000012160"/>
<dbReference type="iPTMnet" id="P82197"/>
<dbReference type="PaxDb" id="9940-ENSOARP00000012160"/>
<dbReference type="GeneID" id="443049"/>
<dbReference type="KEGG" id="oas:443049"/>
<dbReference type="CTD" id="8566"/>
<dbReference type="eggNOG" id="KOG2599">
    <property type="taxonomic scope" value="Eukaryota"/>
</dbReference>
<dbReference type="OrthoDB" id="2104723at2759"/>
<dbReference type="BRENDA" id="2.7.1.35">
    <property type="organism ID" value="2668"/>
</dbReference>
<dbReference type="UniPathway" id="UPA01068">
    <property type="reaction ID" value="UER00298"/>
</dbReference>
<dbReference type="UniPathway" id="UPA01068">
    <property type="reaction ID" value="UER00299"/>
</dbReference>
<dbReference type="UniPathway" id="UPA01068">
    <property type="reaction ID" value="UER00300"/>
</dbReference>
<dbReference type="EvolutionaryTrace" id="P82197"/>
<dbReference type="Proteomes" id="UP000002356">
    <property type="component" value="Unplaced"/>
</dbReference>
<dbReference type="GO" id="GO:0005829">
    <property type="term" value="C:cytosol"/>
    <property type="evidence" value="ECO:0007669"/>
    <property type="project" value="UniProtKB-SubCell"/>
</dbReference>
<dbReference type="GO" id="GO:0005524">
    <property type="term" value="F:ATP binding"/>
    <property type="evidence" value="ECO:0007669"/>
    <property type="project" value="UniProtKB-KW"/>
</dbReference>
<dbReference type="GO" id="GO:0046872">
    <property type="term" value="F:metal ion binding"/>
    <property type="evidence" value="ECO:0007669"/>
    <property type="project" value="UniProtKB-KW"/>
</dbReference>
<dbReference type="GO" id="GO:0008478">
    <property type="term" value="F:pyridoxal kinase activity"/>
    <property type="evidence" value="ECO:0007669"/>
    <property type="project" value="UniProtKB-EC"/>
</dbReference>
<dbReference type="GO" id="GO:0009443">
    <property type="term" value="P:pyridoxal 5'-phosphate salvage"/>
    <property type="evidence" value="ECO:0007669"/>
    <property type="project" value="InterPro"/>
</dbReference>
<dbReference type="CDD" id="cd01173">
    <property type="entry name" value="pyridoxal_pyridoxamine_kinase"/>
    <property type="match status" value="1"/>
</dbReference>
<dbReference type="FunFam" id="3.40.1190.20:FF:000007">
    <property type="entry name" value="Pyridoxal kinase"/>
    <property type="match status" value="1"/>
</dbReference>
<dbReference type="Gene3D" id="3.40.1190.20">
    <property type="match status" value="1"/>
</dbReference>
<dbReference type="InterPro" id="IPR013749">
    <property type="entry name" value="PM/HMP-P_kinase-1"/>
</dbReference>
<dbReference type="InterPro" id="IPR004625">
    <property type="entry name" value="PyrdxlKinase"/>
</dbReference>
<dbReference type="InterPro" id="IPR029056">
    <property type="entry name" value="Ribokinase-like"/>
</dbReference>
<dbReference type="NCBIfam" id="TIGR00687">
    <property type="entry name" value="pyridox_kin"/>
    <property type="match status" value="1"/>
</dbReference>
<dbReference type="PANTHER" id="PTHR10534">
    <property type="entry name" value="PYRIDOXAL KINASE"/>
    <property type="match status" value="1"/>
</dbReference>
<dbReference type="PANTHER" id="PTHR10534:SF2">
    <property type="entry name" value="PYRIDOXAL KINASE"/>
    <property type="match status" value="1"/>
</dbReference>
<dbReference type="Pfam" id="PF08543">
    <property type="entry name" value="Phos_pyr_kin"/>
    <property type="match status" value="1"/>
</dbReference>
<dbReference type="SUPFAM" id="SSF53613">
    <property type="entry name" value="Ribokinase-like"/>
    <property type="match status" value="1"/>
</dbReference>
<comment type="function">
    <text evidence="1 8">Catalyzes the phosphorylation of the dietary vitamin B6 vitamers pyridoxal (PL), pyridoxine (PN) and pyridoxamine (PM) to form pyridoxal 5'-phosphate (PLP), pyridoxine 5'-phosphate (PNP) and pyridoxamine 5'-phosphate (PMP), respectively (By similarity) (PubMed:14722069). PLP is the active form of vitamin B6, and acts as a cofactor for over 140 different enzymatic reactions (By similarity).</text>
</comment>
<comment type="catalytic activity">
    <reaction evidence="1">
        <text>pyridoxal + ATP = pyridoxal 5'-phosphate + ADP + H(+)</text>
        <dbReference type="Rhea" id="RHEA:10224"/>
        <dbReference type="ChEBI" id="CHEBI:15378"/>
        <dbReference type="ChEBI" id="CHEBI:17310"/>
        <dbReference type="ChEBI" id="CHEBI:30616"/>
        <dbReference type="ChEBI" id="CHEBI:456216"/>
        <dbReference type="ChEBI" id="CHEBI:597326"/>
        <dbReference type="EC" id="2.7.1.35"/>
    </reaction>
    <physiologicalReaction direction="left-to-right" evidence="1">
        <dbReference type="Rhea" id="RHEA:10225"/>
    </physiologicalReaction>
</comment>
<comment type="catalytic activity">
    <reaction evidence="1">
        <text>pyridoxamine + ATP = pyridoxamine 5'-phosphate + ADP + H(+)</text>
        <dbReference type="Rhea" id="RHEA:25104"/>
        <dbReference type="ChEBI" id="CHEBI:15378"/>
        <dbReference type="ChEBI" id="CHEBI:30616"/>
        <dbReference type="ChEBI" id="CHEBI:57761"/>
        <dbReference type="ChEBI" id="CHEBI:58451"/>
        <dbReference type="ChEBI" id="CHEBI:456216"/>
        <dbReference type="EC" id="2.7.1.35"/>
    </reaction>
    <physiologicalReaction direction="left-to-right" evidence="1">
        <dbReference type="Rhea" id="RHEA:25105"/>
    </physiologicalReaction>
</comment>
<comment type="catalytic activity">
    <reaction evidence="1">
        <text>pyridoxine + ATP = pyridoxine 5'-phosphate + ADP + H(+)</text>
        <dbReference type="Rhea" id="RHEA:25108"/>
        <dbReference type="ChEBI" id="CHEBI:15378"/>
        <dbReference type="ChEBI" id="CHEBI:16709"/>
        <dbReference type="ChEBI" id="CHEBI:30616"/>
        <dbReference type="ChEBI" id="CHEBI:58589"/>
        <dbReference type="ChEBI" id="CHEBI:456216"/>
        <dbReference type="EC" id="2.7.1.35"/>
    </reaction>
    <physiologicalReaction direction="left-to-right" evidence="1">
        <dbReference type="Rhea" id="RHEA:25109"/>
    </physiologicalReaction>
</comment>
<comment type="cofactor">
    <cofactor evidence="7 8">
        <name>Zn(2+)</name>
        <dbReference type="ChEBI" id="CHEBI:29105"/>
    </cofactor>
    <cofactor evidence="1">
        <name>Mg(2+)</name>
        <dbReference type="ChEBI" id="CHEBI:18420"/>
    </cofactor>
</comment>
<comment type="activity regulation">
    <text evidence="1 7 8">Activated by K(+) (Probable). Activity is increased in the presence of Na(+) (By similarity).</text>
</comment>
<comment type="pathway">
    <text evidence="1">Cofactor metabolism; pyridoxal 5'-phosphate salvage; pyridoxal 5'-phosphate from pyridoxal: step 1/1.</text>
</comment>
<comment type="pathway">
    <text evidence="1">Cofactor metabolism; pyridoxal 5'-phosphate salvage; pyridoxine 5'-phosphate from pyridoxine: step 1/1.</text>
</comment>
<comment type="pathway">
    <text evidence="1">Cofactor metabolism; pyridoxal 5'-phosphate salvage; pyridoxamine 5'-phosphate from pyridoxamine: step 1/1.</text>
</comment>
<comment type="subunit">
    <text evidence="3 4 5">Homodimer.</text>
</comment>
<comment type="subcellular location">
    <subcellularLocation>
        <location evidence="1">Cytoplasm</location>
        <location evidence="1">Cytosol</location>
    </subcellularLocation>
</comment>
<comment type="tissue specificity">
    <text>Ubiquitous.</text>
</comment>
<comment type="similarity">
    <text evidence="6">Belongs to the pyridoxine kinase family.</text>
</comment>
<gene>
    <name type="primary">PDXK</name>
    <name type="synonym">PKH</name>
</gene>
<protein>
    <recommendedName>
        <fullName>Pyridoxal kinase</fullName>
        <ecNumber evidence="1">2.7.1.35</ecNumber>
    </recommendedName>
    <alternativeName>
        <fullName>Pyridoxine kinase</fullName>
    </alternativeName>
</protein>
<name>PDXK_SHEEP</name>
<sequence>MEEECRVLSIQSHVVRGYVGNRAATFPLQVLGFEVDAVNSVQFSNHTGYSHWKGQVLNSDELQELYDGLKLNHVNQYDYVLTGYTRDKSFLAMVVDIVQELKQQNPRLVYVCDPVMGDQRNGEGAMYVPDDLLPVYREKVVPVADIITPNQFEAELLTGRKIHSQEEALEVMDMLHSMGPDTVVITSSNLLSPRGSDYLMALGSQRTRAPDGSVVTQRIRMEMHKVDAVFVGTGDLFAAMLLAWTHKHPNNLKVACEKTVSAMHHVLQRTIKCAKAKSGEGVKPSPAQLELRMVQSKKDIESPEIVVQATVL</sequence>
<reference key="1">
    <citation type="journal article" date="1999" name="J. Protein Chem.">
        <title>Structure of pyridoxal kinase from sheep brain and role of the tryptophanyl residues.</title>
        <authorList>
            <person name="Maras B."/>
            <person name="Valiante S."/>
            <person name="Orru S."/>
            <person name="Simmaco M."/>
            <person name="Barra D."/>
            <person name="Churchich J.E."/>
        </authorList>
    </citation>
    <scope>PROTEIN SEQUENCE</scope>
    <scope>NUCLEOTIDE SEQUENCE OF 113-259</scope>
    <scope>ACETYLATION AT MET-1</scope>
    <source>
        <tissue>Brain</tissue>
    </source>
</reference>
<reference key="2">
    <citation type="submission" date="1999-02" db="EMBL/GenBank/DDBJ databases">
        <authorList>
            <person name="Kwon O.-S."/>
            <person name="Lee H.-S."/>
        </authorList>
    </citation>
    <scope>NUCLEOTIDE SEQUENCE [MRNA] OF 16-312</scope>
    <source>
        <tissue>Liver</tissue>
    </source>
</reference>
<reference key="3">
    <citation type="journal article" date="2002" name="Acta Crystallogr. D">
        <title>Crystallization and preliminary crystallographic studies of pyridoxal kinase from sheep brain.</title>
        <authorList>
            <person name="Li M.-H."/>
            <person name="Kwok F."/>
            <person name="An X.-M."/>
            <person name="Chang W.-R."/>
            <person name="Lau C.-K."/>
            <person name="Zhang J.-P."/>
            <person name="Liu S.-Q."/>
            <person name="Leung Y.-C."/>
            <person name="Jiang T."/>
            <person name="Liang D.-C."/>
        </authorList>
    </citation>
    <scope>CRYSTALLIZATION</scope>
    <scope>SUBUNIT</scope>
</reference>
<reference evidence="9 10" key="4">
    <citation type="journal article" date="2002" name="J. Biol. Chem.">
        <title>Crystal structure of brain pyridoxal kinase, a novel member of the ribokinase superfamily.</title>
        <authorList>
            <person name="Li M.H."/>
            <person name="Kwok F."/>
            <person name="Chang W.R."/>
            <person name="Lau C.K."/>
            <person name="Zhang J.P."/>
            <person name="Lo S.C."/>
            <person name="Jiang T."/>
            <person name="Liang D.C."/>
        </authorList>
    </citation>
    <scope>X-RAY CRYSTALLOGRAPHY (2.10 ANGSTROMS) OF APOENZYME AND IN COMPLEX WITH ZN-ATP AND POTASSIUM</scope>
    <scope>COFACTOR</scope>
</reference>
<reference evidence="11 12 13" key="5">
    <citation type="journal article" date="2004" name="J. Biol. Chem.">
        <title>Conformational changes in the reaction of pyridoxal kinase.</title>
        <authorList>
            <person name="Li M.H."/>
            <person name="Kwok F."/>
            <person name="Chang W.R."/>
            <person name="Liu S.Q."/>
            <person name="Lo S.C."/>
            <person name="Zhang J.P."/>
            <person name="Jiang T."/>
            <person name="Liang D.C."/>
        </authorList>
    </citation>
    <scope>X-RAY CRYSTALLOGRAPHY (2.80 ANGSTROMS) IN COMPLEXES WITH ADP; ATP ANALOG; POTASSIUM; PYRIDOXAL PHOSPHATE AND PYRIDOXAMINE</scope>
    <scope>FUNCTION</scope>
    <scope>COFACTOR</scope>
</reference>
<reference evidence="14 15 16" key="6">
    <citation type="journal article" date="2005" name="J. Biol. Chem.">
        <title>Crystal structure of pyridoxal kinase in complex with roscovitine and derivatives.</title>
        <authorList>
            <person name="Tang L."/>
            <person name="Li M.H."/>
            <person name="Cao P."/>
            <person name="Wang F."/>
            <person name="Chang W.R."/>
            <person name="Bach S."/>
            <person name="Reinhardt J."/>
            <person name="Ferandin Y."/>
            <person name="Galons H."/>
            <person name="Wan Y."/>
            <person name="Gray N."/>
            <person name="Meijer L."/>
            <person name="Jiang T."/>
            <person name="Liang D.C."/>
        </authorList>
    </citation>
    <scope>X-RAY CRYSTALLOGRAPHY (2.60 ANGSTROMS) IN COMPLEXES WITH ROSCOVITINE AND DERIVATIVES</scope>
</reference>
<evidence type="ECO:0000250" key="1">
    <source>
        <dbReference type="UniProtKB" id="O00764"/>
    </source>
</evidence>
<evidence type="ECO:0000269" key="2">
    <source>
    </source>
</evidence>
<evidence type="ECO:0000269" key="3">
    <source>
    </source>
</evidence>
<evidence type="ECO:0000269" key="4">
    <source>
    </source>
</evidence>
<evidence type="ECO:0000269" key="5">
    <source>
    </source>
</evidence>
<evidence type="ECO:0000305" key="6"/>
<evidence type="ECO:0000305" key="7">
    <source>
    </source>
</evidence>
<evidence type="ECO:0000305" key="8">
    <source>
    </source>
</evidence>
<evidence type="ECO:0007744" key="9">
    <source>
        <dbReference type="PDB" id="1LHP"/>
    </source>
</evidence>
<evidence type="ECO:0007744" key="10">
    <source>
        <dbReference type="PDB" id="1LHR"/>
    </source>
</evidence>
<evidence type="ECO:0007744" key="11">
    <source>
        <dbReference type="PDB" id="1RFT"/>
    </source>
</evidence>
<evidence type="ECO:0007744" key="12">
    <source>
        <dbReference type="PDB" id="1RFU"/>
    </source>
</evidence>
<evidence type="ECO:0007744" key="13">
    <source>
        <dbReference type="PDB" id="1RFV"/>
    </source>
</evidence>
<evidence type="ECO:0007744" key="14">
    <source>
        <dbReference type="PDB" id="1YGJ"/>
    </source>
</evidence>
<evidence type="ECO:0007744" key="15">
    <source>
        <dbReference type="PDB" id="1YGK"/>
    </source>
</evidence>
<evidence type="ECO:0007744" key="16">
    <source>
        <dbReference type="PDB" id="1YHJ"/>
    </source>
</evidence>
<evidence type="ECO:0007829" key="17">
    <source>
        <dbReference type="PDB" id="1LHP"/>
    </source>
</evidence>
<evidence type="ECO:0007829" key="18">
    <source>
        <dbReference type="PDB" id="1YGJ"/>
    </source>
</evidence>
<evidence type="ECO:0007829" key="19">
    <source>
        <dbReference type="PDB" id="1YGK"/>
    </source>
</evidence>
<organism>
    <name type="scientific">Ovis aries</name>
    <name type="common">Sheep</name>
    <dbReference type="NCBI Taxonomy" id="9940"/>
    <lineage>
        <taxon>Eukaryota</taxon>
        <taxon>Metazoa</taxon>
        <taxon>Chordata</taxon>
        <taxon>Craniata</taxon>
        <taxon>Vertebrata</taxon>
        <taxon>Euteleostomi</taxon>
        <taxon>Mammalia</taxon>
        <taxon>Eutheria</taxon>
        <taxon>Laurasiatheria</taxon>
        <taxon>Artiodactyla</taxon>
        <taxon>Ruminantia</taxon>
        <taxon>Pecora</taxon>
        <taxon>Bovidae</taxon>
        <taxon>Caprinae</taxon>
        <taxon>Ovis</taxon>
    </lineage>
</organism>